<sequence>MISDLISKLQEKTDLTYDEMNQVMTDVLSGKTTDSENADFLSNLTDKGETDDELLGMLDKMQEFSLKIEPKNTGTIIDMCGTGGDKLQTFNISTTASFVVAAAGGVVAKHGNRSSSGISGSADIFEYFGYDLNLEPPKIAEILEKHNICFMFAQKFHPAMKHVSVARKQLGKRTAFNLLGPLSNPAKVKNQLVGVFSIEYLDRLPLILKRKGAQNIMTVRSDDGMDEFSTSSTNRVCVLRDDKVLMNAIDPEVVGLHKSSLTDIQIQTKEDAIESFVGVLNNTANQAMIETTALNAAGGLIVANISNNFEEAVELALNTIKDGKAFSLLEKFVQDTGDISKLKEIADG</sequence>
<evidence type="ECO:0000255" key="1">
    <source>
        <dbReference type="HAMAP-Rule" id="MF_00211"/>
    </source>
</evidence>
<proteinExistence type="inferred from homology"/>
<protein>
    <recommendedName>
        <fullName evidence="1">Anthranilate phosphoribosyltransferase</fullName>
        <ecNumber evidence="1">2.4.2.18</ecNumber>
    </recommendedName>
</protein>
<name>TRPD_NITMS</name>
<keyword id="KW-0028">Amino-acid biosynthesis</keyword>
<keyword id="KW-0057">Aromatic amino acid biosynthesis</keyword>
<keyword id="KW-0328">Glycosyltransferase</keyword>
<keyword id="KW-0460">Magnesium</keyword>
<keyword id="KW-0479">Metal-binding</keyword>
<keyword id="KW-1185">Reference proteome</keyword>
<keyword id="KW-0808">Transferase</keyword>
<keyword id="KW-0822">Tryptophan biosynthesis</keyword>
<comment type="function">
    <text evidence="1">Catalyzes the transfer of the phosphoribosyl group of 5-phosphorylribose-1-pyrophosphate (PRPP) to anthranilate to yield N-(5'-phosphoribosyl)-anthranilate (PRA).</text>
</comment>
<comment type="catalytic activity">
    <reaction evidence="1">
        <text>N-(5-phospho-beta-D-ribosyl)anthranilate + diphosphate = 5-phospho-alpha-D-ribose 1-diphosphate + anthranilate</text>
        <dbReference type="Rhea" id="RHEA:11768"/>
        <dbReference type="ChEBI" id="CHEBI:16567"/>
        <dbReference type="ChEBI" id="CHEBI:18277"/>
        <dbReference type="ChEBI" id="CHEBI:33019"/>
        <dbReference type="ChEBI" id="CHEBI:58017"/>
        <dbReference type="EC" id="2.4.2.18"/>
    </reaction>
</comment>
<comment type="cofactor">
    <cofactor evidence="1">
        <name>Mg(2+)</name>
        <dbReference type="ChEBI" id="CHEBI:18420"/>
    </cofactor>
    <text evidence="1">Binds 2 magnesium ions per monomer.</text>
</comment>
<comment type="pathway">
    <text evidence="1">Amino-acid biosynthesis; L-tryptophan biosynthesis; L-tryptophan from chorismate: step 2/5.</text>
</comment>
<comment type="subunit">
    <text evidence="1">Homodimer.</text>
</comment>
<comment type="similarity">
    <text evidence="1">Belongs to the anthranilate phosphoribosyltransferase family.</text>
</comment>
<accession>A9A298</accession>
<feature type="chain" id="PRO_1000099825" description="Anthranilate phosphoribosyltransferase">
    <location>
        <begin position="1"/>
        <end position="348"/>
    </location>
</feature>
<feature type="binding site" evidence="1">
    <location>
        <position position="81"/>
    </location>
    <ligand>
        <name>5-phospho-alpha-D-ribose 1-diphosphate</name>
        <dbReference type="ChEBI" id="CHEBI:58017"/>
    </ligand>
</feature>
<feature type="binding site" evidence="1">
    <location>
        <position position="81"/>
    </location>
    <ligand>
        <name>anthranilate</name>
        <dbReference type="ChEBI" id="CHEBI:16567"/>
        <label>1</label>
    </ligand>
</feature>
<feature type="binding site" evidence="1">
    <location>
        <begin position="84"/>
        <end position="85"/>
    </location>
    <ligand>
        <name>5-phospho-alpha-D-ribose 1-diphosphate</name>
        <dbReference type="ChEBI" id="CHEBI:58017"/>
    </ligand>
</feature>
<feature type="binding site" evidence="1">
    <location>
        <position position="89"/>
    </location>
    <ligand>
        <name>5-phospho-alpha-D-ribose 1-diphosphate</name>
        <dbReference type="ChEBI" id="CHEBI:58017"/>
    </ligand>
</feature>
<feature type="binding site" evidence="1">
    <location>
        <begin position="91"/>
        <end position="94"/>
    </location>
    <ligand>
        <name>5-phospho-alpha-D-ribose 1-diphosphate</name>
        <dbReference type="ChEBI" id="CHEBI:58017"/>
    </ligand>
</feature>
<feature type="binding site" evidence="1">
    <location>
        <position position="93"/>
    </location>
    <ligand>
        <name>Mg(2+)</name>
        <dbReference type="ChEBI" id="CHEBI:18420"/>
        <label>1</label>
    </ligand>
</feature>
<feature type="binding site" evidence="1">
    <location>
        <begin position="109"/>
        <end position="117"/>
    </location>
    <ligand>
        <name>5-phospho-alpha-D-ribose 1-diphosphate</name>
        <dbReference type="ChEBI" id="CHEBI:58017"/>
    </ligand>
</feature>
<feature type="binding site" evidence="1">
    <location>
        <position position="112"/>
    </location>
    <ligand>
        <name>anthranilate</name>
        <dbReference type="ChEBI" id="CHEBI:16567"/>
        <label>1</label>
    </ligand>
</feature>
<feature type="binding site" evidence="1">
    <location>
        <position position="121"/>
    </location>
    <ligand>
        <name>5-phospho-alpha-D-ribose 1-diphosphate</name>
        <dbReference type="ChEBI" id="CHEBI:58017"/>
    </ligand>
</feature>
<feature type="binding site" evidence="1">
    <location>
        <position position="167"/>
    </location>
    <ligand>
        <name>anthranilate</name>
        <dbReference type="ChEBI" id="CHEBI:16567"/>
        <label>2</label>
    </ligand>
</feature>
<feature type="binding site" evidence="1">
    <location>
        <position position="226"/>
    </location>
    <ligand>
        <name>Mg(2+)</name>
        <dbReference type="ChEBI" id="CHEBI:18420"/>
        <label>2</label>
    </ligand>
</feature>
<feature type="binding site" evidence="1">
    <location>
        <position position="227"/>
    </location>
    <ligand>
        <name>Mg(2+)</name>
        <dbReference type="ChEBI" id="CHEBI:18420"/>
        <label>1</label>
    </ligand>
</feature>
<feature type="binding site" evidence="1">
    <location>
        <position position="227"/>
    </location>
    <ligand>
        <name>Mg(2+)</name>
        <dbReference type="ChEBI" id="CHEBI:18420"/>
        <label>2</label>
    </ligand>
</feature>
<gene>
    <name evidence="1" type="primary">trpD</name>
    <name type="ordered locus">Nmar_0913</name>
</gene>
<organism>
    <name type="scientific">Nitrosopumilus maritimus (strain SCM1)</name>
    <dbReference type="NCBI Taxonomy" id="436308"/>
    <lineage>
        <taxon>Archaea</taxon>
        <taxon>Nitrososphaerota</taxon>
        <taxon>Nitrososphaeria</taxon>
        <taxon>Nitrosopumilales</taxon>
        <taxon>Nitrosopumilaceae</taxon>
        <taxon>Nitrosopumilus</taxon>
    </lineage>
</organism>
<dbReference type="EC" id="2.4.2.18" evidence="1"/>
<dbReference type="EMBL" id="CP000866">
    <property type="protein sequence ID" value="ABX12809.1"/>
    <property type="molecule type" value="Genomic_DNA"/>
</dbReference>
<dbReference type="RefSeq" id="WP_012215296.1">
    <property type="nucleotide sequence ID" value="NC_010085.1"/>
</dbReference>
<dbReference type="SMR" id="A9A298"/>
<dbReference type="FunCoup" id="A9A298">
    <property type="interactions" value="80"/>
</dbReference>
<dbReference type="STRING" id="436308.Nmar_0913"/>
<dbReference type="EnsemblBacteria" id="ABX12809">
    <property type="protein sequence ID" value="ABX12809"/>
    <property type="gene ID" value="Nmar_0913"/>
</dbReference>
<dbReference type="GeneID" id="5774459"/>
<dbReference type="KEGG" id="nmr:Nmar_0913"/>
<dbReference type="eggNOG" id="arCOG02012">
    <property type="taxonomic scope" value="Archaea"/>
</dbReference>
<dbReference type="HOGENOM" id="CLU_034315_2_1_2"/>
<dbReference type="InParanoid" id="A9A298"/>
<dbReference type="OrthoDB" id="8214at2157"/>
<dbReference type="PhylomeDB" id="A9A298"/>
<dbReference type="UniPathway" id="UPA00035">
    <property type="reaction ID" value="UER00041"/>
</dbReference>
<dbReference type="Proteomes" id="UP000000792">
    <property type="component" value="Chromosome"/>
</dbReference>
<dbReference type="GO" id="GO:0005829">
    <property type="term" value="C:cytosol"/>
    <property type="evidence" value="ECO:0000318"/>
    <property type="project" value="GO_Central"/>
</dbReference>
<dbReference type="GO" id="GO:0004048">
    <property type="term" value="F:anthranilate phosphoribosyltransferase activity"/>
    <property type="evidence" value="ECO:0007669"/>
    <property type="project" value="UniProtKB-UniRule"/>
</dbReference>
<dbReference type="GO" id="GO:0000287">
    <property type="term" value="F:magnesium ion binding"/>
    <property type="evidence" value="ECO:0007669"/>
    <property type="project" value="UniProtKB-UniRule"/>
</dbReference>
<dbReference type="GO" id="GO:0000162">
    <property type="term" value="P:L-tryptophan biosynthetic process"/>
    <property type="evidence" value="ECO:0000318"/>
    <property type="project" value="GO_Central"/>
</dbReference>
<dbReference type="FunFam" id="3.40.1030.10:FF:000002">
    <property type="entry name" value="Anthranilate phosphoribosyltransferase"/>
    <property type="match status" value="1"/>
</dbReference>
<dbReference type="Gene3D" id="3.40.1030.10">
    <property type="entry name" value="Nucleoside phosphorylase/phosphoribosyltransferase catalytic domain"/>
    <property type="match status" value="1"/>
</dbReference>
<dbReference type="Gene3D" id="1.20.970.10">
    <property type="entry name" value="Transferase, Pyrimidine Nucleoside Phosphorylase, Chain C"/>
    <property type="match status" value="1"/>
</dbReference>
<dbReference type="HAMAP" id="MF_00211">
    <property type="entry name" value="TrpD"/>
    <property type="match status" value="1"/>
</dbReference>
<dbReference type="InterPro" id="IPR005940">
    <property type="entry name" value="Anthranilate_Pribosyl_Tfrase"/>
</dbReference>
<dbReference type="InterPro" id="IPR000312">
    <property type="entry name" value="Glycosyl_Trfase_fam3"/>
</dbReference>
<dbReference type="InterPro" id="IPR017459">
    <property type="entry name" value="Glycosyl_Trfase_fam3_N_dom"/>
</dbReference>
<dbReference type="InterPro" id="IPR036320">
    <property type="entry name" value="Glycosyl_Trfase_fam3_N_dom_sf"/>
</dbReference>
<dbReference type="InterPro" id="IPR035902">
    <property type="entry name" value="Nuc_phospho_transferase"/>
</dbReference>
<dbReference type="NCBIfam" id="TIGR01245">
    <property type="entry name" value="trpD"/>
    <property type="match status" value="1"/>
</dbReference>
<dbReference type="PANTHER" id="PTHR43285">
    <property type="entry name" value="ANTHRANILATE PHOSPHORIBOSYLTRANSFERASE"/>
    <property type="match status" value="1"/>
</dbReference>
<dbReference type="PANTHER" id="PTHR43285:SF2">
    <property type="entry name" value="ANTHRANILATE PHOSPHORIBOSYLTRANSFERASE"/>
    <property type="match status" value="1"/>
</dbReference>
<dbReference type="Pfam" id="PF02885">
    <property type="entry name" value="Glycos_trans_3N"/>
    <property type="match status" value="1"/>
</dbReference>
<dbReference type="Pfam" id="PF00591">
    <property type="entry name" value="Glycos_transf_3"/>
    <property type="match status" value="1"/>
</dbReference>
<dbReference type="SUPFAM" id="SSF52418">
    <property type="entry name" value="Nucleoside phosphorylase/phosphoribosyltransferase catalytic domain"/>
    <property type="match status" value="1"/>
</dbReference>
<dbReference type="SUPFAM" id="SSF47648">
    <property type="entry name" value="Nucleoside phosphorylase/phosphoribosyltransferase N-terminal domain"/>
    <property type="match status" value="1"/>
</dbReference>
<reference key="1">
    <citation type="journal article" date="2010" name="Proc. Natl. Acad. Sci. U.S.A.">
        <title>Nitrosopumilus maritimus genome reveals unique mechanisms for nitrification and autotrophy in globally distributed marine crenarchaea.</title>
        <authorList>
            <person name="Walker C.B."/>
            <person name="de la Torre J.R."/>
            <person name="Klotz M.G."/>
            <person name="Urakawa H."/>
            <person name="Pinel N."/>
            <person name="Arp D.J."/>
            <person name="Brochier-Armanet C."/>
            <person name="Chain P.S."/>
            <person name="Chan P.P."/>
            <person name="Gollabgir A."/>
            <person name="Hemp J."/>
            <person name="Hugler M."/>
            <person name="Karr E.A."/>
            <person name="Konneke M."/>
            <person name="Shin M."/>
            <person name="Lawton T.J."/>
            <person name="Lowe T."/>
            <person name="Martens-Habbena W."/>
            <person name="Sayavedra-Soto L.A."/>
            <person name="Lang D."/>
            <person name="Sievert S.M."/>
            <person name="Rosenzweig A.C."/>
            <person name="Manning G."/>
            <person name="Stahl D.A."/>
        </authorList>
    </citation>
    <scope>NUCLEOTIDE SEQUENCE [LARGE SCALE GENOMIC DNA]</scope>
    <source>
        <strain>SCM1</strain>
    </source>
</reference>